<keyword id="KW-0143">Chaperone</keyword>
<keyword id="KW-0963">Cytoplasm</keyword>
<keyword id="KW-0346">Stress response</keyword>
<name>GRPE_STAAM</name>
<sequence length="208" mass="24022">MTNKDESVEKNTESTVEETNIKQNIDDSVEQAEESKGHLQDEAIEETSDENVIEEIDPKDQKINELQQLADENEEKYLRLYAEFENYKRRIQKENEINKTYQAQRVLTDILPAIDNIERALQIEGDDETFKSLQKGVQMVHESLINALKDNGLEVIKTEGEAFDPNIHQAVVQDDNPDFESGEITQELQKGYKLKDRVLRPSMVKVNQ</sequence>
<accession>P63189</accession>
<accession>P45553</accession>
<feature type="chain" id="PRO_0000113855" description="Protein GrpE">
    <location>
        <begin position="1"/>
        <end position="208"/>
    </location>
</feature>
<feature type="region of interest" description="Disordered" evidence="2">
    <location>
        <begin position="1"/>
        <end position="59"/>
    </location>
</feature>
<feature type="compositionally biased region" description="Basic and acidic residues" evidence="2">
    <location>
        <begin position="1"/>
        <end position="12"/>
    </location>
</feature>
<feature type="compositionally biased region" description="Polar residues" evidence="2">
    <location>
        <begin position="13"/>
        <end position="23"/>
    </location>
</feature>
<feature type="compositionally biased region" description="Acidic residues" evidence="2">
    <location>
        <begin position="42"/>
        <end position="55"/>
    </location>
</feature>
<comment type="function">
    <text evidence="1">Participates actively in the response to hyperosmotic and heat shock by preventing the aggregation of stress-denatured proteins, in association with DnaK and GrpE. It is the nucleotide exchange factor for DnaK and may function as a thermosensor. Unfolded proteins bind initially to DnaJ; upon interaction with the DnaJ-bound protein, DnaK hydrolyzes its bound ATP, resulting in the formation of a stable complex. GrpE releases ADP from DnaK; ATP binding to DnaK triggers the release of the substrate protein, thus completing the reaction cycle. Several rounds of ATP-dependent interactions between DnaJ, DnaK and GrpE are required for fully efficient folding.</text>
</comment>
<comment type="subunit">
    <text evidence="1">Homodimer.</text>
</comment>
<comment type="subcellular location">
    <subcellularLocation>
        <location evidence="1">Cytoplasm</location>
    </subcellularLocation>
</comment>
<comment type="similarity">
    <text evidence="1">Belongs to the GrpE family.</text>
</comment>
<evidence type="ECO:0000255" key="1">
    <source>
        <dbReference type="HAMAP-Rule" id="MF_01151"/>
    </source>
</evidence>
<evidence type="ECO:0000256" key="2">
    <source>
        <dbReference type="SAM" id="MobiDB-lite"/>
    </source>
</evidence>
<organism>
    <name type="scientific">Staphylococcus aureus (strain Mu50 / ATCC 700699)</name>
    <dbReference type="NCBI Taxonomy" id="158878"/>
    <lineage>
        <taxon>Bacteria</taxon>
        <taxon>Bacillati</taxon>
        <taxon>Bacillota</taxon>
        <taxon>Bacilli</taxon>
        <taxon>Bacillales</taxon>
        <taxon>Staphylococcaceae</taxon>
        <taxon>Staphylococcus</taxon>
    </lineage>
</organism>
<gene>
    <name evidence="1" type="primary">grpE</name>
    <name type="ordered locus">SAV1581</name>
</gene>
<protein>
    <recommendedName>
        <fullName evidence="1">Protein GrpE</fullName>
    </recommendedName>
    <alternativeName>
        <fullName evidence="1">HSP-70 cofactor</fullName>
    </alternativeName>
</protein>
<dbReference type="EMBL" id="BA000017">
    <property type="protein sequence ID" value="BAB57743.1"/>
    <property type="molecule type" value="Genomic_DNA"/>
</dbReference>
<dbReference type="RefSeq" id="WP_000182211.1">
    <property type="nucleotide sequence ID" value="NC_002758.2"/>
</dbReference>
<dbReference type="SMR" id="P63189"/>
<dbReference type="KEGG" id="sav:SAV1581"/>
<dbReference type="HOGENOM" id="CLU_057217_6_3_9"/>
<dbReference type="PhylomeDB" id="P63189"/>
<dbReference type="Proteomes" id="UP000002481">
    <property type="component" value="Chromosome"/>
</dbReference>
<dbReference type="GO" id="GO:0005737">
    <property type="term" value="C:cytoplasm"/>
    <property type="evidence" value="ECO:0007669"/>
    <property type="project" value="UniProtKB-SubCell"/>
</dbReference>
<dbReference type="GO" id="GO:0000774">
    <property type="term" value="F:adenyl-nucleotide exchange factor activity"/>
    <property type="evidence" value="ECO:0007669"/>
    <property type="project" value="InterPro"/>
</dbReference>
<dbReference type="GO" id="GO:0042803">
    <property type="term" value="F:protein homodimerization activity"/>
    <property type="evidence" value="ECO:0007669"/>
    <property type="project" value="InterPro"/>
</dbReference>
<dbReference type="GO" id="GO:0051087">
    <property type="term" value="F:protein-folding chaperone binding"/>
    <property type="evidence" value="ECO:0007669"/>
    <property type="project" value="InterPro"/>
</dbReference>
<dbReference type="GO" id="GO:0051082">
    <property type="term" value="F:unfolded protein binding"/>
    <property type="evidence" value="ECO:0007669"/>
    <property type="project" value="TreeGrafter"/>
</dbReference>
<dbReference type="GO" id="GO:0006457">
    <property type="term" value="P:protein folding"/>
    <property type="evidence" value="ECO:0007669"/>
    <property type="project" value="InterPro"/>
</dbReference>
<dbReference type="CDD" id="cd00446">
    <property type="entry name" value="GrpE"/>
    <property type="match status" value="1"/>
</dbReference>
<dbReference type="FunFam" id="2.30.22.10:FF:000001">
    <property type="entry name" value="Protein GrpE"/>
    <property type="match status" value="1"/>
</dbReference>
<dbReference type="FunFam" id="3.90.20.20:FF:000002">
    <property type="entry name" value="Protein GrpE"/>
    <property type="match status" value="1"/>
</dbReference>
<dbReference type="Gene3D" id="3.90.20.20">
    <property type="match status" value="1"/>
</dbReference>
<dbReference type="Gene3D" id="2.30.22.10">
    <property type="entry name" value="Head domain of nucleotide exchange factor GrpE"/>
    <property type="match status" value="1"/>
</dbReference>
<dbReference type="HAMAP" id="MF_01151">
    <property type="entry name" value="GrpE"/>
    <property type="match status" value="1"/>
</dbReference>
<dbReference type="InterPro" id="IPR000740">
    <property type="entry name" value="GrpE"/>
</dbReference>
<dbReference type="InterPro" id="IPR013805">
    <property type="entry name" value="GrpE_coiled_coil"/>
</dbReference>
<dbReference type="InterPro" id="IPR009012">
    <property type="entry name" value="GrpE_head"/>
</dbReference>
<dbReference type="NCBIfam" id="NF010738">
    <property type="entry name" value="PRK14140.1"/>
    <property type="match status" value="1"/>
</dbReference>
<dbReference type="PANTHER" id="PTHR21237">
    <property type="entry name" value="GRPE PROTEIN"/>
    <property type="match status" value="1"/>
</dbReference>
<dbReference type="PANTHER" id="PTHR21237:SF23">
    <property type="entry name" value="GRPE PROTEIN HOMOLOG, MITOCHONDRIAL"/>
    <property type="match status" value="1"/>
</dbReference>
<dbReference type="Pfam" id="PF01025">
    <property type="entry name" value="GrpE"/>
    <property type="match status" value="1"/>
</dbReference>
<dbReference type="PRINTS" id="PR00773">
    <property type="entry name" value="GRPEPROTEIN"/>
</dbReference>
<dbReference type="SUPFAM" id="SSF58014">
    <property type="entry name" value="Coiled-coil domain of nucleotide exchange factor GrpE"/>
    <property type="match status" value="1"/>
</dbReference>
<dbReference type="SUPFAM" id="SSF51064">
    <property type="entry name" value="Head domain of nucleotide exchange factor GrpE"/>
    <property type="match status" value="1"/>
</dbReference>
<dbReference type="PROSITE" id="PS01071">
    <property type="entry name" value="GRPE"/>
    <property type="match status" value="1"/>
</dbReference>
<proteinExistence type="inferred from homology"/>
<reference key="1">
    <citation type="journal article" date="2001" name="Lancet">
        <title>Whole genome sequencing of meticillin-resistant Staphylococcus aureus.</title>
        <authorList>
            <person name="Kuroda M."/>
            <person name="Ohta T."/>
            <person name="Uchiyama I."/>
            <person name="Baba T."/>
            <person name="Yuzawa H."/>
            <person name="Kobayashi I."/>
            <person name="Cui L."/>
            <person name="Oguchi A."/>
            <person name="Aoki K."/>
            <person name="Nagai Y."/>
            <person name="Lian J.-Q."/>
            <person name="Ito T."/>
            <person name="Kanamori M."/>
            <person name="Matsumaru H."/>
            <person name="Maruyama A."/>
            <person name="Murakami H."/>
            <person name="Hosoyama A."/>
            <person name="Mizutani-Ui Y."/>
            <person name="Takahashi N.K."/>
            <person name="Sawano T."/>
            <person name="Inoue R."/>
            <person name="Kaito C."/>
            <person name="Sekimizu K."/>
            <person name="Hirakawa H."/>
            <person name="Kuhara S."/>
            <person name="Goto S."/>
            <person name="Yabuzaki J."/>
            <person name="Kanehisa M."/>
            <person name="Yamashita A."/>
            <person name="Oshima K."/>
            <person name="Furuya K."/>
            <person name="Yoshino C."/>
            <person name="Shiba T."/>
            <person name="Hattori M."/>
            <person name="Ogasawara N."/>
            <person name="Hayashi H."/>
            <person name="Hiramatsu K."/>
        </authorList>
    </citation>
    <scope>NUCLEOTIDE SEQUENCE [LARGE SCALE GENOMIC DNA]</scope>
    <source>
        <strain>Mu50 / ATCC 700699</strain>
    </source>
</reference>